<keyword id="KW-0687">Ribonucleoprotein</keyword>
<keyword id="KW-0689">Ribosomal protein</keyword>
<proteinExistence type="inferred from homology"/>
<accession>B3CQD5</accession>
<name>RL32_ORITI</name>
<evidence type="ECO:0000255" key="1">
    <source>
        <dbReference type="HAMAP-Rule" id="MF_00340"/>
    </source>
</evidence>
<evidence type="ECO:0000305" key="2"/>
<feature type="chain" id="PRO_1000120153" description="Large ribosomal subunit protein bL32">
    <location>
        <begin position="1"/>
        <end position="68"/>
    </location>
</feature>
<reference key="1">
    <citation type="journal article" date="2008" name="DNA Res.">
        <title>The whole-genome sequencing of the obligate intracellular bacterium Orientia tsutsugamushi revealed massive gene amplification during reductive genome evolution.</title>
        <authorList>
            <person name="Nakayama K."/>
            <person name="Yamashita A."/>
            <person name="Kurokawa K."/>
            <person name="Morimoto T."/>
            <person name="Ogawa M."/>
            <person name="Fukuhara M."/>
            <person name="Urakami H."/>
            <person name="Ohnishi M."/>
            <person name="Uchiyama I."/>
            <person name="Ogura Y."/>
            <person name="Ooka T."/>
            <person name="Oshima K."/>
            <person name="Tamura A."/>
            <person name="Hattori M."/>
            <person name="Hayashi T."/>
        </authorList>
    </citation>
    <scope>NUCLEOTIDE SEQUENCE [LARGE SCALE GENOMIC DNA]</scope>
    <source>
        <strain>Ikeda</strain>
    </source>
</reference>
<gene>
    <name evidence="1" type="primary">rpmF</name>
    <name type="ordered locus">OTT_0016</name>
</gene>
<comment type="similarity">
    <text evidence="1">Belongs to the bacterial ribosomal protein bL32 family.</text>
</comment>
<sequence length="68" mass="7650">MAVPKKRTSASKTRMRRSHHALAKVNVITDAKTGEYRLSHHVCMTHGTYNGRKVITDNVNTNDNNNNS</sequence>
<organism>
    <name type="scientific">Orientia tsutsugamushi (strain Ikeda)</name>
    <name type="common">Rickettsia tsutsugamushi</name>
    <dbReference type="NCBI Taxonomy" id="334380"/>
    <lineage>
        <taxon>Bacteria</taxon>
        <taxon>Pseudomonadati</taxon>
        <taxon>Pseudomonadota</taxon>
        <taxon>Alphaproteobacteria</taxon>
        <taxon>Rickettsiales</taxon>
        <taxon>Rickettsiaceae</taxon>
        <taxon>Rickettsieae</taxon>
        <taxon>Orientia</taxon>
    </lineage>
</organism>
<protein>
    <recommendedName>
        <fullName evidence="1">Large ribosomal subunit protein bL32</fullName>
    </recommendedName>
    <alternativeName>
        <fullName evidence="2">50S ribosomal protein L32</fullName>
    </alternativeName>
</protein>
<dbReference type="EMBL" id="AP008981">
    <property type="protein sequence ID" value="BAG39474.1"/>
    <property type="molecule type" value="Genomic_DNA"/>
</dbReference>
<dbReference type="RefSeq" id="WP_012460740.1">
    <property type="nucleotide sequence ID" value="NC_010793.1"/>
</dbReference>
<dbReference type="SMR" id="B3CQD5"/>
<dbReference type="KEGG" id="ott:OTT_0016"/>
<dbReference type="HOGENOM" id="CLU_129084_2_0_5"/>
<dbReference type="OrthoDB" id="9801927at2"/>
<dbReference type="Proteomes" id="UP000001033">
    <property type="component" value="Chromosome"/>
</dbReference>
<dbReference type="GO" id="GO:0015934">
    <property type="term" value="C:large ribosomal subunit"/>
    <property type="evidence" value="ECO:0007669"/>
    <property type="project" value="InterPro"/>
</dbReference>
<dbReference type="GO" id="GO:0003735">
    <property type="term" value="F:structural constituent of ribosome"/>
    <property type="evidence" value="ECO:0007669"/>
    <property type="project" value="InterPro"/>
</dbReference>
<dbReference type="GO" id="GO:0006412">
    <property type="term" value="P:translation"/>
    <property type="evidence" value="ECO:0007669"/>
    <property type="project" value="UniProtKB-UniRule"/>
</dbReference>
<dbReference type="Gene3D" id="1.20.5.640">
    <property type="entry name" value="Single helix bin"/>
    <property type="match status" value="1"/>
</dbReference>
<dbReference type="HAMAP" id="MF_00340">
    <property type="entry name" value="Ribosomal_bL32"/>
    <property type="match status" value="1"/>
</dbReference>
<dbReference type="InterPro" id="IPR002677">
    <property type="entry name" value="Ribosomal_bL32"/>
</dbReference>
<dbReference type="InterPro" id="IPR044957">
    <property type="entry name" value="Ribosomal_bL32_bact"/>
</dbReference>
<dbReference type="InterPro" id="IPR011332">
    <property type="entry name" value="Ribosomal_zn-bd"/>
</dbReference>
<dbReference type="NCBIfam" id="TIGR01031">
    <property type="entry name" value="rpmF_bact"/>
    <property type="match status" value="1"/>
</dbReference>
<dbReference type="PANTHER" id="PTHR35534">
    <property type="entry name" value="50S RIBOSOMAL PROTEIN L32"/>
    <property type="match status" value="1"/>
</dbReference>
<dbReference type="PANTHER" id="PTHR35534:SF1">
    <property type="entry name" value="LARGE RIBOSOMAL SUBUNIT PROTEIN BL32"/>
    <property type="match status" value="1"/>
</dbReference>
<dbReference type="Pfam" id="PF01783">
    <property type="entry name" value="Ribosomal_L32p"/>
    <property type="match status" value="1"/>
</dbReference>
<dbReference type="SUPFAM" id="SSF57829">
    <property type="entry name" value="Zn-binding ribosomal proteins"/>
    <property type="match status" value="1"/>
</dbReference>